<feature type="chain" id="PRO_0000221662" description="28.1 kDa virulence protein">
    <location>
        <begin position="1"/>
        <end position="255"/>
    </location>
</feature>
<sequence length="255" mass="28151">MNMNQTTSPALSQVETAIRVPAGIFAKYNYYSVFDIVRQTRKQFINANMSWPGSRGGKTWDLAMGQAQYIRCMFRENQLTRRVRGTLQQTPDNGTNLSSSAVGGIQGQAERRPDLATLMVVNDAINQQIPTLLPTHFPHDQVELSLLNTDVSLEDIISESSIDWPWFLSNSLTGDNSNYAMELASRLSPEQQTLPTEPDNSTATDLTSFYQTNLGLKTADYTPFEALNTFARQLAITVPPGGTVDCGYSACQPAV</sequence>
<keyword id="KW-0903">Direct protein sequencing</keyword>
<keyword id="KW-0614">Plasmid</keyword>
<keyword id="KW-0843">Virulence</keyword>
<accession>P21455</accession>
<reference key="1">
    <citation type="journal article" date="1989" name="FEBS Lett.">
        <title>Molecular organization of genes constituting the virulence determinant on the Salmonella typhimurium 96 kilobase pair plasmid.</title>
        <authorList>
            <person name="Taira S."/>
            <person name="Rhen M."/>
        </authorList>
    </citation>
    <scope>NUCLEOTIDE SEQUENCE [GENOMIC DNA]</scope>
</reference>
<reference key="2">
    <citation type="journal article" date="1991" name="FEMS Microbiol. Lett.">
        <title>Amino-terminal sequence analysis of four plasmid-encoded virulence-associated proteins of Salmonella typhimurium.</title>
        <authorList>
            <person name="Taira S."/>
            <person name="Baumann M."/>
            <person name="Riikonen P."/>
            <person name="Sukupolvi S."/>
            <person name="Rhen M."/>
        </authorList>
    </citation>
    <scope>PROTEIN SEQUENCE OF 1-10</scope>
    <source>
        <plasmid>pEX102</plasmid>
    </source>
</reference>
<geneLocation type="plasmid">
    <name>pEX102</name>
</geneLocation>
<evidence type="ECO:0000305" key="1"/>
<protein>
    <recommendedName>
        <fullName>28.1 kDa virulence protein</fullName>
    </recommendedName>
</protein>
<proteinExistence type="evidence at protein level"/>
<gene>
    <name type="primary">mkaB</name>
</gene>
<dbReference type="PIR" id="S06669">
    <property type="entry name" value="S06669"/>
</dbReference>
<dbReference type="InterPro" id="IPR018003">
    <property type="entry name" value="Insecticidal_toxin/plasmid_vir"/>
</dbReference>
<dbReference type="InterPro" id="IPR003518">
    <property type="entry name" value="Sal_SpvA"/>
</dbReference>
<dbReference type="NCBIfam" id="NF011759">
    <property type="entry name" value="PRK15212.1"/>
    <property type="match status" value="1"/>
</dbReference>
<dbReference type="Pfam" id="PF03538">
    <property type="entry name" value="VRP1"/>
    <property type="match status" value="2"/>
</dbReference>
<dbReference type="PRINTS" id="PR01340">
    <property type="entry name" value="SALSPVAPROT"/>
</dbReference>
<name>VRP1_SALTM</name>
<organism>
    <name type="scientific">Salmonella typhimurium</name>
    <dbReference type="NCBI Taxonomy" id="90371"/>
    <lineage>
        <taxon>Bacteria</taxon>
        <taxon>Pseudomonadati</taxon>
        <taxon>Pseudomonadota</taxon>
        <taxon>Gammaproteobacteria</taxon>
        <taxon>Enterobacterales</taxon>
        <taxon>Enterobacteriaceae</taxon>
        <taxon>Salmonella</taxon>
    </lineage>
</organism>
<comment type="function">
    <text>Not known. This protein is involved in the virulence of salmonellas.</text>
</comment>
<comment type="similarity">
    <text evidence="1">Belongs to the SpvA family.</text>
</comment>